<sequence length="311" mass="33909">MALPILLDCDPGHDDAIAIVLALASPELDVKAITSSAGNQTPEKTLRNVLRMLTLLNRTDIPVAGGAVKPLMRELIIADNVHGESGLDGPALPEPTFAPQNCTAVELMAKTLRESAEPVTIVSTGPQTNVALLLNSHPELHSKIARIVIMGGAMGLGNWTPAAEFNIYVDPEAAEIVFQSGIPVVMAGLDVTHKAQIHIEDTERFRAIGNPVSTIVAELLDFFLEYHKDEKWGFVGAPLHDPCTIAWLLKPELFTTVERWVGVETQGKYTQGMTVVDYYYLTDNKPNATVMVDVDRQGFVDLLADRLKFYA</sequence>
<organism>
    <name type="scientific">Shigella boydii serotype 4 (strain Sb227)</name>
    <dbReference type="NCBI Taxonomy" id="300268"/>
    <lineage>
        <taxon>Bacteria</taxon>
        <taxon>Pseudomonadati</taxon>
        <taxon>Pseudomonadota</taxon>
        <taxon>Gammaproteobacteria</taxon>
        <taxon>Enterobacterales</taxon>
        <taxon>Enterobacteriaceae</taxon>
        <taxon>Shigella</taxon>
    </lineage>
</organism>
<keyword id="KW-0326">Glycosidase</keyword>
<keyword id="KW-0378">Hydrolase</keyword>
<accession>Q324P5</accession>
<comment type="function">
    <text evidence="1">Hydrolyzes cytidine or uridine to ribose and cytosine or uracil, respectively.</text>
</comment>
<comment type="similarity">
    <text evidence="1">Belongs to the IUNH family. RihA subfamily.</text>
</comment>
<dbReference type="EC" id="3.2.-.-" evidence="1"/>
<dbReference type="EMBL" id="CP000036">
    <property type="protein sequence ID" value="ABB65213.1"/>
    <property type="molecule type" value="Genomic_DNA"/>
</dbReference>
<dbReference type="RefSeq" id="WP_001207514.1">
    <property type="nucleotide sequence ID" value="NC_007613.1"/>
</dbReference>
<dbReference type="SMR" id="Q324P5"/>
<dbReference type="KEGG" id="sbo:SBO_0514"/>
<dbReference type="HOGENOM" id="CLU_036838_2_0_6"/>
<dbReference type="Proteomes" id="UP000007067">
    <property type="component" value="Chromosome"/>
</dbReference>
<dbReference type="GO" id="GO:0005829">
    <property type="term" value="C:cytosol"/>
    <property type="evidence" value="ECO:0007669"/>
    <property type="project" value="TreeGrafter"/>
</dbReference>
<dbReference type="GO" id="GO:0008477">
    <property type="term" value="F:purine nucleosidase activity"/>
    <property type="evidence" value="ECO:0007669"/>
    <property type="project" value="TreeGrafter"/>
</dbReference>
<dbReference type="GO" id="GO:0045437">
    <property type="term" value="F:uridine nucleosidase activity"/>
    <property type="evidence" value="ECO:0007669"/>
    <property type="project" value="InterPro"/>
</dbReference>
<dbReference type="GO" id="GO:0015949">
    <property type="term" value="P:nucleobase-containing small molecule interconversion"/>
    <property type="evidence" value="ECO:0007669"/>
    <property type="project" value="InterPro"/>
</dbReference>
<dbReference type="GO" id="GO:0006152">
    <property type="term" value="P:purine nucleoside catabolic process"/>
    <property type="evidence" value="ECO:0007669"/>
    <property type="project" value="TreeGrafter"/>
</dbReference>
<dbReference type="GO" id="GO:0006206">
    <property type="term" value="P:pyrimidine nucleobase metabolic process"/>
    <property type="evidence" value="ECO:0007669"/>
    <property type="project" value="UniProtKB-UniRule"/>
</dbReference>
<dbReference type="CDD" id="cd02651">
    <property type="entry name" value="nuc_hydro_IU_UC_XIUA"/>
    <property type="match status" value="1"/>
</dbReference>
<dbReference type="FunFam" id="3.90.245.10:FF:000001">
    <property type="entry name" value="Pyrimidine-specific ribonucleoside hydrolase RihA"/>
    <property type="match status" value="1"/>
</dbReference>
<dbReference type="Gene3D" id="3.90.245.10">
    <property type="entry name" value="Ribonucleoside hydrolase-like"/>
    <property type="match status" value="1"/>
</dbReference>
<dbReference type="HAMAP" id="MF_01431">
    <property type="entry name" value="Pyrim_hydro_RihA"/>
    <property type="match status" value="1"/>
</dbReference>
<dbReference type="InterPro" id="IPR015910">
    <property type="entry name" value="I/U_nuclsd_hydro_CS"/>
</dbReference>
<dbReference type="InterPro" id="IPR001910">
    <property type="entry name" value="Inosine/uridine_hydrolase_dom"/>
</dbReference>
<dbReference type="InterPro" id="IPR023186">
    <property type="entry name" value="IUNH"/>
</dbReference>
<dbReference type="InterPro" id="IPR022975">
    <property type="entry name" value="Pyrim_hydro_RihA"/>
</dbReference>
<dbReference type="InterPro" id="IPR036452">
    <property type="entry name" value="Ribo_hydro-like"/>
</dbReference>
<dbReference type="NCBIfam" id="NF007761">
    <property type="entry name" value="PRK10443.1"/>
    <property type="match status" value="1"/>
</dbReference>
<dbReference type="PANTHER" id="PTHR12304">
    <property type="entry name" value="INOSINE-URIDINE PREFERRING NUCLEOSIDE HYDROLASE"/>
    <property type="match status" value="1"/>
</dbReference>
<dbReference type="PANTHER" id="PTHR12304:SF4">
    <property type="entry name" value="URIDINE NUCLEOSIDASE"/>
    <property type="match status" value="1"/>
</dbReference>
<dbReference type="Pfam" id="PF01156">
    <property type="entry name" value="IU_nuc_hydro"/>
    <property type="match status" value="1"/>
</dbReference>
<dbReference type="SUPFAM" id="SSF53590">
    <property type="entry name" value="Nucleoside hydrolase"/>
    <property type="match status" value="1"/>
</dbReference>
<dbReference type="PROSITE" id="PS01247">
    <property type="entry name" value="IUNH"/>
    <property type="match status" value="1"/>
</dbReference>
<proteinExistence type="inferred from homology"/>
<feature type="chain" id="PRO_1000024402" description="Pyrimidine-specific ribonucleoside hydrolase RihA">
    <location>
        <begin position="1"/>
        <end position="311"/>
    </location>
</feature>
<feature type="active site" evidence="1">
    <location>
        <position position="240"/>
    </location>
</feature>
<gene>
    <name evidence="1" type="primary">rihA</name>
    <name type="ordered locus">SBO_0514</name>
</gene>
<name>RIHA_SHIBS</name>
<reference key="1">
    <citation type="journal article" date="2005" name="Nucleic Acids Res.">
        <title>Genome dynamics and diversity of Shigella species, the etiologic agents of bacillary dysentery.</title>
        <authorList>
            <person name="Yang F."/>
            <person name="Yang J."/>
            <person name="Zhang X."/>
            <person name="Chen L."/>
            <person name="Jiang Y."/>
            <person name="Yan Y."/>
            <person name="Tang X."/>
            <person name="Wang J."/>
            <person name="Xiong Z."/>
            <person name="Dong J."/>
            <person name="Xue Y."/>
            <person name="Zhu Y."/>
            <person name="Xu X."/>
            <person name="Sun L."/>
            <person name="Chen S."/>
            <person name="Nie H."/>
            <person name="Peng J."/>
            <person name="Xu J."/>
            <person name="Wang Y."/>
            <person name="Yuan Z."/>
            <person name="Wen Y."/>
            <person name="Yao Z."/>
            <person name="Shen Y."/>
            <person name="Qiang B."/>
            <person name="Hou Y."/>
            <person name="Yu J."/>
            <person name="Jin Q."/>
        </authorList>
    </citation>
    <scope>NUCLEOTIDE SEQUENCE [LARGE SCALE GENOMIC DNA]</scope>
    <source>
        <strain>Sb227</strain>
    </source>
</reference>
<protein>
    <recommendedName>
        <fullName evidence="1">Pyrimidine-specific ribonucleoside hydrolase RihA</fullName>
        <ecNumber evidence="1">3.2.-.-</ecNumber>
    </recommendedName>
    <alternativeName>
        <fullName evidence="1">Cytidine/uridine-specific hydrolase</fullName>
    </alternativeName>
</protein>
<evidence type="ECO:0000255" key="1">
    <source>
        <dbReference type="HAMAP-Rule" id="MF_01431"/>
    </source>
</evidence>